<organism>
    <name type="scientific">Rickettsia bellii (strain OSU 85-389)</name>
    <dbReference type="NCBI Taxonomy" id="391896"/>
    <lineage>
        <taxon>Bacteria</taxon>
        <taxon>Pseudomonadati</taxon>
        <taxon>Pseudomonadota</taxon>
        <taxon>Alphaproteobacteria</taxon>
        <taxon>Rickettsiales</taxon>
        <taxon>Rickettsiaceae</taxon>
        <taxon>Rickettsieae</taxon>
        <taxon>Rickettsia</taxon>
        <taxon>belli group</taxon>
    </lineage>
</organism>
<name>DDL_RICB8</name>
<protein>
    <recommendedName>
        <fullName evidence="2">D-alanine--D-alanine ligase</fullName>
        <ecNumber evidence="2">6.3.2.4</ecNumber>
    </recommendedName>
    <alternativeName>
        <fullName evidence="2">D-Ala-D-Ala ligase</fullName>
    </alternativeName>
    <alternativeName>
        <fullName evidence="2">D-alanylalanine synthetase</fullName>
    </alternativeName>
</protein>
<feature type="chain" id="PRO_1000030487" description="D-alanine--D-alanine ligase">
    <location>
        <begin position="1"/>
        <end position="321"/>
    </location>
</feature>
<feature type="domain" description="ATP-grasp" evidence="2">
    <location>
        <begin position="121"/>
        <end position="315"/>
    </location>
</feature>
<feature type="binding site" evidence="2">
    <location>
        <begin position="148"/>
        <end position="199"/>
    </location>
    <ligand>
        <name>ATP</name>
        <dbReference type="ChEBI" id="CHEBI:30616"/>
    </ligand>
</feature>
<feature type="binding site" evidence="2">
    <location>
        <position position="268"/>
    </location>
    <ligand>
        <name>Mg(2+)</name>
        <dbReference type="ChEBI" id="CHEBI:18420"/>
        <label>1</label>
    </ligand>
</feature>
<feature type="binding site" evidence="2">
    <location>
        <position position="282"/>
    </location>
    <ligand>
        <name>Mg(2+)</name>
        <dbReference type="ChEBI" id="CHEBI:18420"/>
        <label>1</label>
    </ligand>
</feature>
<feature type="binding site" evidence="2">
    <location>
        <position position="282"/>
    </location>
    <ligand>
        <name>Mg(2+)</name>
        <dbReference type="ChEBI" id="CHEBI:18420"/>
        <label>2</label>
    </ligand>
</feature>
<feature type="binding site" evidence="2">
    <location>
        <position position="284"/>
    </location>
    <ligand>
        <name>Mg(2+)</name>
        <dbReference type="ChEBI" id="CHEBI:18420"/>
        <label>2</label>
    </ligand>
</feature>
<evidence type="ECO:0000250" key="1"/>
<evidence type="ECO:0000255" key="2">
    <source>
        <dbReference type="HAMAP-Rule" id="MF_00047"/>
    </source>
</evidence>
<sequence length="321" mass="35791">MHKYQTHWVESSEIKILSDKGKKHIALVAGGMSAEREVSLISAEGVGKALIEAGYKVTFIDMGADIAVKLHEIKPDIVFNCLHGTYGEDGCLPGLLNIMRIPYTHSGVLASSLAFDKVHSRSWFLTNNINMAESIVISKGDNIKTDPIKRPYVIKPFTQGSSIGVEVIFEEDDFNFANYDFPYGDEVIIEKYIKGRELQVAILNGKALGALEIKLLKNRFYDYETKYTEGFAEHLCPAPLPTDIYDKLLKESEKIYNTMNCKGAARAEFILEDGTNKLYALEINTHPGMTPLSIVPEIAAYHGIDFVNLIEEILKTASFES</sequence>
<dbReference type="EC" id="6.3.2.4" evidence="2"/>
<dbReference type="EMBL" id="CP000849">
    <property type="protein sequence ID" value="ABV79123.1"/>
    <property type="molecule type" value="Genomic_DNA"/>
</dbReference>
<dbReference type="RefSeq" id="WP_012151853.1">
    <property type="nucleotide sequence ID" value="NC_009883.1"/>
</dbReference>
<dbReference type="SMR" id="A8GW96"/>
<dbReference type="KEGG" id="rbo:A1I_03850"/>
<dbReference type="HOGENOM" id="CLU_039268_1_1_5"/>
<dbReference type="UniPathway" id="UPA00219"/>
<dbReference type="GO" id="GO:0005737">
    <property type="term" value="C:cytoplasm"/>
    <property type="evidence" value="ECO:0007669"/>
    <property type="project" value="UniProtKB-SubCell"/>
</dbReference>
<dbReference type="GO" id="GO:0005524">
    <property type="term" value="F:ATP binding"/>
    <property type="evidence" value="ECO:0007669"/>
    <property type="project" value="UniProtKB-KW"/>
</dbReference>
<dbReference type="GO" id="GO:0008716">
    <property type="term" value="F:D-alanine-D-alanine ligase activity"/>
    <property type="evidence" value="ECO:0007669"/>
    <property type="project" value="UniProtKB-UniRule"/>
</dbReference>
<dbReference type="GO" id="GO:0046872">
    <property type="term" value="F:metal ion binding"/>
    <property type="evidence" value="ECO:0007669"/>
    <property type="project" value="UniProtKB-KW"/>
</dbReference>
<dbReference type="GO" id="GO:0071555">
    <property type="term" value="P:cell wall organization"/>
    <property type="evidence" value="ECO:0007669"/>
    <property type="project" value="UniProtKB-KW"/>
</dbReference>
<dbReference type="GO" id="GO:0009252">
    <property type="term" value="P:peptidoglycan biosynthetic process"/>
    <property type="evidence" value="ECO:0007669"/>
    <property type="project" value="UniProtKB-UniRule"/>
</dbReference>
<dbReference type="GO" id="GO:0008360">
    <property type="term" value="P:regulation of cell shape"/>
    <property type="evidence" value="ECO:0007669"/>
    <property type="project" value="UniProtKB-KW"/>
</dbReference>
<dbReference type="Gene3D" id="3.40.50.20">
    <property type="match status" value="1"/>
</dbReference>
<dbReference type="Gene3D" id="3.30.1490.20">
    <property type="entry name" value="ATP-grasp fold, A domain"/>
    <property type="match status" value="1"/>
</dbReference>
<dbReference type="Gene3D" id="3.30.470.20">
    <property type="entry name" value="ATP-grasp fold, B domain"/>
    <property type="match status" value="1"/>
</dbReference>
<dbReference type="HAMAP" id="MF_00047">
    <property type="entry name" value="Dala_Dala_lig"/>
    <property type="match status" value="1"/>
</dbReference>
<dbReference type="InterPro" id="IPR011761">
    <property type="entry name" value="ATP-grasp"/>
</dbReference>
<dbReference type="InterPro" id="IPR013815">
    <property type="entry name" value="ATP_grasp_subdomain_1"/>
</dbReference>
<dbReference type="InterPro" id="IPR000291">
    <property type="entry name" value="D-Ala_lig_Van_CS"/>
</dbReference>
<dbReference type="InterPro" id="IPR005905">
    <property type="entry name" value="D_ala_D_ala"/>
</dbReference>
<dbReference type="InterPro" id="IPR011095">
    <property type="entry name" value="Dala_Dala_lig_C"/>
</dbReference>
<dbReference type="InterPro" id="IPR011127">
    <property type="entry name" value="Dala_Dala_lig_N"/>
</dbReference>
<dbReference type="InterPro" id="IPR016185">
    <property type="entry name" value="PreATP-grasp_dom_sf"/>
</dbReference>
<dbReference type="NCBIfam" id="TIGR01205">
    <property type="entry name" value="D_ala_D_alaTIGR"/>
    <property type="match status" value="1"/>
</dbReference>
<dbReference type="NCBIfam" id="NF002378">
    <property type="entry name" value="PRK01372.1"/>
    <property type="match status" value="1"/>
</dbReference>
<dbReference type="PANTHER" id="PTHR23132">
    <property type="entry name" value="D-ALANINE--D-ALANINE LIGASE"/>
    <property type="match status" value="1"/>
</dbReference>
<dbReference type="PANTHER" id="PTHR23132:SF23">
    <property type="entry name" value="D-ALANINE--D-ALANINE LIGASE B"/>
    <property type="match status" value="1"/>
</dbReference>
<dbReference type="Pfam" id="PF07478">
    <property type="entry name" value="Dala_Dala_lig_C"/>
    <property type="match status" value="1"/>
</dbReference>
<dbReference type="Pfam" id="PF01820">
    <property type="entry name" value="Dala_Dala_lig_N"/>
    <property type="match status" value="1"/>
</dbReference>
<dbReference type="PIRSF" id="PIRSF039102">
    <property type="entry name" value="Ddl/VanB"/>
    <property type="match status" value="1"/>
</dbReference>
<dbReference type="SUPFAM" id="SSF56059">
    <property type="entry name" value="Glutathione synthetase ATP-binding domain-like"/>
    <property type="match status" value="1"/>
</dbReference>
<dbReference type="SUPFAM" id="SSF52440">
    <property type="entry name" value="PreATP-grasp domain"/>
    <property type="match status" value="1"/>
</dbReference>
<dbReference type="PROSITE" id="PS50975">
    <property type="entry name" value="ATP_GRASP"/>
    <property type="match status" value="1"/>
</dbReference>
<dbReference type="PROSITE" id="PS00843">
    <property type="entry name" value="DALA_DALA_LIGASE_1"/>
    <property type="match status" value="1"/>
</dbReference>
<dbReference type="PROSITE" id="PS00844">
    <property type="entry name" value="DALA_DALA_LIGASE_2"/>
    <property type="match status" value="1"/>
</dbReference>
<gene>
    <name evidence="2" type="primary">ddl</name>
    <name type="ordered locus">A1I_03850</name>
</gene>
<reference key="1">
    <citation type="submission" date="2007-09" db="EMBL/GenBank/DDBJ databases">
        <title>Complete genome sequencing of Rickettsia bellii.</title>
        <authorList>
            <person name="Madan A."/>
            <person name="Lee H."/>
            <person name="Madan A."/>
            <person name="Yoon J.-G."/>
            <person name="Ryu G.-Y."/>
            <person name="Dasch G."/>
            <person name="Ereemeva M."/>
        </authorList>
    </citation>
    <scope>NUCLEOTIDE SEQUENCE [LARGE SCALE GENOMIC DNA]</scope>
    <source>
        <strain>OSU 85-389</strain>
    </source>
</reference>
<accession>A8GW96</accession>
<comment type="function">
    <text evidence="2">Cell wall formation.</text>
</comment>
<comment type="catalytic activity">
    <reaction evidence="2">
        <text>2 D-alanine + ATP = D-alanyl-D-alanine + ADP + phosphate + H(+)</text>
        <dbReference type="Rhea" id="RHEA:11224"/>
        <dbReference type="ChEBI" id="CHEBI:15378"/>
        <dbReference type="ChEBI" id="CHEBI:30616"/>
        <dbReference type="ChEBI" id="CHEBI:43474"/>
        <dbReference type="ChEBI" id="CHEBI:57416"/>
        <dbReference type="ChEBI" id="CHEBI:57822"/>
        <dbReference type="ChEBI" id="CHEBI:456216"/>
        <dbReference type="EC" id="6.3.2.4"/>
    </reaction>
</comment>
<comment type="cofactor">
    <cofactor evidence="1">
        <name>Mg(2+)</name>
        <dbReference type="ChEBI" id="CHEBI:18420"/>
    </cofactor>
    <cofactor evidence="1">
        <name>Mn(2+)</name>
        <dbReference type="ChEBI" id="CHEBI:29035"/>
    </cofactor>
    <text evidence="1">Binds 2 magnesium or manganese ions per subunit.</text>
</comment>
<comment type="pathway">
    <text evidence="2">Cell wall biogenesis; peptidoglycan biosynthesis.</text>
</comment>
<comment type="subcellular location">
    <subcellularLocation>
        <location evidence="2">Cytoplasm</location>
    </subcellularLocation>
</comment>
<comment type="similarity">
    <text evidence="2">Belongs to the D-alanine--D-alanine ligase family.</text>
</comment>
<keyword id="KW-0067">ATP-binding</keyword>
<keyword id="KW-0133">Cell shape</keyword>
<keyword id="KW-0961">Cell wall biogenesis/degradation</keyword>
<keyword id="KW-0963">Cytoplasm</keyword>
<keyword id="KW-0436">Ligase</keyword>
<keyword id="KW-0460">Magnesium</keyword>
<keyword id="KW-0464">Manganese</keyword>
<keyword id="KW-0479">Metal-binding</keyword>
<keyword id="KW-0547">Nucleotide-binding</keyword>
<keyword id="KW-0573">Peptidoglycan synthesis</keyword>
<proteinExistence type="inferred from homology"/>